<feature type="chain" id="PRO_1000060107" description="Peptide chain release factor subunit 1">
    <location>
        <begin position="1"/>
        <end position="411"/>
    </location>
</feature>
<gene>
    <name evidence="1" type="primary">prf1</name>
    <name type="ordered locus">Msp_1363</name>
</gene>
<organism>
    <name type="scientific">Methanosphaera stadtmanae (strain ATCC 43021 / DSM 3091 / JCM 11832 / MCB-3)</name>
    <dbReference type="NCBI Taxonomy" id="339860"/>
    <lineage>
        <taxon>Archaea</taxon>
        <taxon>Methanobacteriati</taxon>
        <taxon>Methanobacteriota</taxon>
        <taxon>Methanomada group</taxon>
        <taxon>Methanobacteria</taxon>
        <taxon>Methanobacteriales</taxon>
        <taxon>Methanobacteriaceae</taxon>
        <taxon>Methanosphaera</taxon>
    </lineage>
</organism>
<reference key="1">
    <citation type="journal article" date="2006" name="J. Bacteriol.">
        <title>The genome sequence of Methanosphaera stadtmanae reveals why this human intestinal archaeon is restricted to methanol and H2 for methane formation and ATP synthesis.</title>
        <authorList>
            <person name="Fricke W.F."/>
            <person name="Seedorf H."/>
            <person name="Henne A."/>
            <person name="Kruer M."/>
            <person name="Liesegang H."/>
            <person name="Hedderich R."/>
            <person name="Gottschalk G."/>
            <person name="Thauer R.K."/>
        </authorList>
    </citation>
    <scope>NUCLEOTIDE SEQUENCE [LARGE SCALE GENOMIC DNA]</scope>
    <source>
        <strain>ATCC 43021 / DSM 3091 / JCM 11832 / MCB-3</strain>
    </source>
</reference>
<sequence>MSDVSSKEIYEVKKTLKELEDKKGRGTELVSVYIPPEKQISDVAKQMRDELGQSANIKSKQTRKNVQSAIEVIIQRLKLFPKPPEKGLVMFVGMIPKGGPGTEKMETYVFQPPEAVQTYTYHCDSQFFVEPLKQIIEYKEVYGVVVLDRKESTIATLRGKRIDIIKHLTSGVPGKHKAGGQSQRRFDRVIELAAHEFLKRIGRHVDEAFLPLKDELKGVLIGGPGHTKNDFVDGEYIHYEIHDKIINIVDTSYTGDFGIREVIDESADTLDEMDIMQEKKFMRKFLTGLISESGLSTYGEKEVRQNLQMGAVETLLISENLKSKRQTYTCPACNTVDVITTRQHQEPPEKRCPKCNEVMKITKTQETAEELIELAEEVKTHVEVISIETEEGTQLDKAFGGIAGILRYKVK</sequence>
<keyword id="KW-0963">Cytoplasm</keyword>
<keyword id="KW-0648">Protein biosynthesis</keyword>
<keyword id="KW-1185">Reference proteome</keyword>
<comment type="function">
    <text evidence="1">Directs the termination of nascent peptide synthesis (translation) in response to the termination codons UAA, UAG and UGA.</text>
</comment>
<comment type="subunit">
    <text evidence="1">Heterodimer of two subunits, one of which binds GTP.</text>
</comment>
<comment type="subcellular location">
    <subcellularLocation>
        <location evidence="1">Cytoplasm</location>
    </subcellularLocation>
</comment>
<comment type="similarity">
    <text evidence="1">Belongs to the eukaryotic release factor 1 family.</text>
</comment>
<evidence type="ECO:0000255" key="1">
    <source>
        <dbReference type="HAMAP-Rule" id="MF_00424"/>
    </source>
</evidence>
<accession>Q2NEL3</accession>
<name>RF1_METST</name>
<protein>
    <recommendedName>
        <fullName evidence="1">Peptide chain release factor subunit 1</fullName>
    </recommendedName>
    <alternativeName>
        <fullName evidence="1">Translation termination factor aRF1</fullName>
    </alternativeName>
</protein>
<dbReference type="EMBL" id="CP000102">
    <property type="protein sequence ID" value="ABC57740.1"/>
    <property type="molecule type" value="Genomic_DNA"/>
</dbReference>
<dbReference type="RefSeq" id="WP_011406939.1">
    <property type="nucleotide sequence ID" value="NC_007681.1"/>
</dbReference>
<dbReference type="SMR" id="Q2NEL3"/>
<dbReference type="STRING" id="339860.Msp_1363"/>
<dbReference type="GeneID" id="41325933"/>
<dbReference type="KEGG" id="mst:Msp_1363"/>
<dbReference type="eggNOG" id="arCOG01742">
    <property type="taxonomic scope" value="Archaea"/>
</dbReference>
<dbReference type="HOGENOM" id="CLU_035759_3_0_2"/>
<dbReference type="OrthoDB" id="1011at2157"/>
<dbReference type="Proteomes" id="UP000001931">
    <property type="component" value="Chromosome"/>
</dbReference>
<dbReference type="GO" id="GO:0005737">
    <property type="term" value="C:cytoplasm"/>
    <property type="evidence" value="ECO:0007669"/>
    <property type="project" value="UniProtKB-SubCell"/>
</dbReference>
<dbReference type="GO" id="GO:0016149">
    <property type="term" value="F:translation release factor activity, codon specific"/>
    <property type="evidence" value="ECO:0007669"/>
    <property type="project" value="UniProtKB-UniRule"/>
</dbReference>
<dbReference type="FunFam" id="3.30.1330.30:FF:000032">
    <property type="entry name" value="Eukaryotic peptide chain release factor subunit 1"/>
    <property type="match status" value="1"/>
</dbReference>
<dbReference type="FunFam" id="3.30.420.60:FF:000003">
    <property type="entry name" value="Peptide chain release factor subunit 1"/>
    <property type="match status" value="1"/>
</dbReference>
<dbReference type="FunFam" id="3.30.960.10:FF:000003">
    <property type="entry name" value="Peptide chain release factor subunit 1"/>
    <property type="match status" value="1"/>
</dbReference>
<dbReference type="Gene3D" id="1.20.5.170">
    <property type="match status" value="1"/>
</dbReference>
<dbReference type="Gene3D" id="3.30.1330.30">
    <property type="match status" value="1"/>
</dbReference>
<dbReference type="Gene3D" id="3.30.960.10">
    <property type="entry name" value="eRF1 domain 1"/>
    <property type="match status" value="1"/>
</dbReference>
<dbReference type="Gene3D" id="3.30.420.60">
    <property type="entry name" value="eRF1 domain 2"/>
    <property type="match status" value="1"/>
</dbReference>
<dbReference type="HAMAP" id="MF_00424">
    <property type="entry name" value="Rel_fact_arch_1"/>
    <property type="match status" value="1"/>
</dbReference>
<dbReference type="InterPro" id="IPR042226">
    <property type="entry name" value="eFR1_2_sf"/>
</dbReference>
<dbReference type="InterPro" id="IPR005140">
    <property type="entry name" value="eRF1_1_Pelota"/>
</dbReference>
<dbReference type="InterPro" id="IPR024049">
    <property type="entry name" value="eRF1_1_sf"/>
</dbReference>
<dbReference type="InterPro" id="IPR005141">
    <property type="entry name" value="eRF1_2"/>
</dbReference>
<dbReference type="InterPro" id="IPR005142">
    <property type="entry name" value="eRF1_3"/>
</dbReference>
<dbReference type="InterPro" id="IPR020918">
    <property type="entry name" value="Peptide_chain-rel_aRF1"/>
</dbReference>
<dbReference type="InterPro" id="IPR004403">
    <property type="entry name" value="Peptide_chain-rel_eRF1/aRF1"/>
</dbReference>
<dbReference type="InterPro" id="IPR029064">
    <property type="entry name" value="Ribosomal_eL30-like_sf"/>
</dbReference>
<dbReference type="NCBIfam" id="TIGR03676">
    <property type="entry name" value="aRF1_eRF1"/>
    <property type="match status" value="1"/>
</dbReference>
<dbReference type="PANTHER" id="PTHR10113">
    <property type="entry name" value="PEPTIDE CHAIN RELEASE FACTOR SUBUNIT 1"/>
    <property type="match status" value="1"/>
</dbReference>
<dbReference type="Pfam" id="PF03463">
    <property type="entry name" value="eRF1_1"/>
    <property type="match status" value="1"/>
</dbReference>
<dbReference type="Pfam" id="PF03464">
    <property type="entry name" value="eRF1_2"/>
    <property type="match status" value="1"/>
</dbReference>
<dbReference type="Pfam" id="PF03465">
    <property type="entry name" value="eRF1_3"/>
    <property type="match status" value="1"/>
</dbReference>
<dbReference type="SMART" id="SM01194">
    <property type="entry name" value="eRF1_1"/>
    <property type="match status" value="1"/>
</dbReference>
<dbReference type="SUPFAM" id="SSF55315">
    <property type="entry name" value="L30e-like"/>
    <property type="match status" value="1"/>
</dbReference>
<dbReference type="SUPFAM" id="SSF55481">
    <property type="entry name" value="N-terminal domain of eukaryotic peptide chain release factor subunit 1, ERF1"/>
    <property type="match status" value="1"/>
</dbReference>
<dbReference type="SUPFAM" id="SSF53137">
    <property type="entry name" value="Translational machinery components"/>
    <property type="match status" value="1"/>
</dbReference>
<proteinExistence type="inferred from homology"/>